<name>TEX52_HUMAN</name>
<reference key="1">
    <citation type="journal article" date="2006" name="Nature">
        <title>The finished DNA sequence of human chromosome 12.</title>
        <authorList>
            <person name="Scherer S.E."/>
            <person name="Muzny D.M."/>
            <person name="Buhay C.J."/>
            <person name="Chen R."/>
            <person name="Cree A."/>
            <person name="Ding Y."/>
            <person name="Dugan-Rocha S."/>
            <person name="Gill R."/>
            <person name="Gunaratne P."/>
            <person name="Harris R.A."/>
            <person name="Hawes A.C."/>
            <person name="Hernandez J."/>
            <person name="Hodgson A.V."/>
            <person name="Hume J."/>
            <person name="Jackson A."/>
            <person name="Khan Z.M."/>
            <person name="Kovar-Smith C."/>
            <person name="Lewis L.R."/>
            <person name="Lozado R.J."/>
            <person name="Metzker M.L."/>
            <person name="Milosavljevic A."/>
            <person name="Miner G.R."/>
            <person name="Montgomery K.T."/>
            <person name="Morgan M.B."/>
            <person name="Nazareth L.V."/>
            <person name="Scott G."/>
            <person name="Sodergren E."/>
            <person name="Song X.-Z."/>
            <person name="Steffen D."/>
            <person name="Lovering R.C."/>
            <person name="Wheeler D.A."/>
            <person name="Worley K.C."/>
            <person name="Yuan Y."/>
            <person name="Zhang Z."/>
            <person name="Adams C.Q."/>
            <person name="Ansari-Lari M.A."/>
            <person name="Ayele M."/>
            <person name="Brown M.J."/>
            <person name="Chen G."/>
            <person name="Chen Z."/>
            <person name="Clerc-Blankenburg K.P."/>
            <person name="Davis C."/>
            <person name="Delgado O."/>
            <person name="Dinh H.H."/>
            <person name="Draper H."/>
            <person name="Gonzalez-Garay M.L."/>
            <person name="Havlak P."/>
            <person name="Jackson L.R."/>
            <person name="Jacob L.S."/>
            <person name="Kelly S.H."/>
            <person name="Li L."/>
            <person name="Li Z."/>
            <person name="Liu J."/>
            <person name="Liu W."/>
            <person name="Lu J."/>
            <person name="Maheshwari M."/>
            <person name="Nguyen B.-V."/>
            <person name="Okwuonu G.O."/>
            <person name="Pasternak S."/>
            <person name="Perez L.M."/>
            <person name="Plopper F.J.H."/>
            <person name="Santibanez J."/>
            <person name="Shen H."/>
            <person name="Tabor P.E."/>
            <person name="Verduzco D."/>
            <person name="Waldron L."/>
            <person name="Wang Q."/>
            <person name="Williams G.A."/>
            <person name="Zhang J."/>
            <person name="Zhou J."/>
            <person name="Allen C.C."/>
            <person name="Amin A.G."/>
            <person name="Anyalebechi V."/>
            <person name="Bailey M."/>
            <person name="Barbaria J.A."/>
            <person name="Bimage K.E."/>
            <person name="Bryant N.P."/>
            <person name="Burch P.E."/>
            <person name="Burkett C.E."/>
            <person name="Burrell K.L."/>
            <person name="Calderon E."/>
            <person name="Cardenas V."/>
            <person name="Carter K."/>
            <person name="Casias K."/>
            <person name="Cavazos I."/>
            <person name="Cavazos S.R."/>
            <person name="Ceasar H."/>
            <person name="Chacko J."/>
            <person name="Chan S.N."/>
            <person name="Chavez D."/>
            <person name="Christopoulos C."/>
            <person name="Chu J."/>
            <person name="Cockrell R."/>
            <person name="Cox C.D."/>
            <person name="Dang M."/>
            <person name="Dathorne S.R."/>
            <person name="David R."/>
            <person name="Davis C.M."/>
            <person name="Davy-Carroll L."/>
            <person name="Deshazo D.R."/>
            <person name="Donlin J.E."/>
            <person name="D'Souza L."/>
            <person name="Eaves K.A."/>
            <person name="Egan A."/>
            <person name="Emery-Cohen A.J."/>
            <person name="Escotto M."/>
            <person name="Flagg N."/>
            <person name="Forbes L.D."/>
            <person name="Gabisi A.M."/>
            <person name="Garza M."/>
            <person name="Hamilton C."/>
            <person name="Henderson N."/>
            <person name="Hernandez O."/>
            <person name="Hines S."/>
            <person name="Hogues M.E."/>
            <person name="Huang M."/>
            <person name="Idlebird D.G."/>
            <person name="Johnson R."/>
            <person name="Jolivet A."/>
            <person name="Jones S."/>
            <person name="Kagan R."/>
            <person name="King L.M."/>
            <person name="Leal B."/>
            <person name="Lebow H."/>
            <person name="Lee S."/>
            <person name="LeVan J.M."/>
            <person name="Lewis L.C."/>
            <person name="London P."/>
            <person name="Lorensuhewa L.M."/>
            <person name="Loulseged H."/>
            <person name="Lovett D.A."/>
            <person name="Lucier A."/>
            <person name="Lucier R.L."/>
            <person name="Ma J."/>
            <person name="Madu R.C."/>
            <person name="Mapua P."/>
            <person name="Martindale A.D."/>
            <person name="Martinez E."/>
            <person name="Massey E."/>
            <person name="Mawhiney S."/>
            <person name="Meador M.G."/>
            <person name="Mendez S."/>
            <person name="Mercado C."/>
            <person name="Mercado I.C."/>
            <person name="Merritt C.E."/>
            <person name="Miner Z.L."/>
            <person name="Minja E."/>
            <person name="Mitchell T."/>
            <person name="Mohabbat F."/>
            <person name="Mohabbat K."/>
            <person name="Montgomery B."/>
            <person name="Moore N."/>
            <person name="Morris S."/>
            <person name="Munidasa M."/>
            <person name="Ngo R.N."/>
            <person name="Nguyen N.B."/>
            <person name="Nickerson E."/>
            <person name="Nwaokelemeh O.O."/>
            <person name="Nwokenkwo S."/>
            <person name="Obregon M."/>
            <person name="Oguh M."/>
            <person name="Oragunye N."/>
            <person name="Oviedo R.J."/>
            <person name="Parish B.J."/>
            <person name="Parker D.N."/>
            <person name="Parrish J."/>
            <person name="Parks K.L."/>
            <person name="Paul H.A."/>
            <person name="Payton B.A."/>
            <person name="Perez A."/>
            <person name="Perrin W."/>
            <person name="Pickens A."/>
            <person name="Primus E.L."/>
            <person name="Pu L.-L."/>
            <person name="Puazo M."/>
            <person name="Quiles M.M."/>
            <person name="Quiroz J.B."/>
            <person name="Rabata D."/>
            <person name="Reeves K."/>
            <person name="Ruiz S.J."/>
            <person name="Shao H."/>
            <person name="Sisson I."/>
            <person name="Sonaike T."/>
            <person name="Sorelle R.P."/>
            <person name="Sutton A.E."/>
            <person name="Svatek A.F."/>
            <person name="Svetz L.A."/>
            <person name="Tamerisa K.S."/>
            <person name="Taylor T.R."/>
            <person name="Teague B."/>
            <person name="Thomas N."/>
            <person name="Thorn R.D."/>
            <person name="Trejos Z.Y."/>
            <person name="Trevino B.K."/>
            <person name="Ukegbu O.N."/>
            <person name="Urban J.B."/>
            <person name="Vasquez L.I."/>
            <person name="Vera V.A."/>
            <person name="Villasana D.M."/>
            <person name="Wang L."/>
            <person name="Ward-Moore S."/>
            <person name="Warren J.T."/>
            <person name="Wei X."/>
            <person name="White F."/>
            <person name="Williamson A.L."/>
            <person name="Wleczyk R."/>
            <person name="Wooden H.S."/>
            <person name="Wooden S.H."/>
            <person name="Yen J."/>
            <person name="Yoon L."/>
            <person name="Yoon V."/>
            <person name="Zorrilla S.E."/>
            <person name="Nelson D."/>
            <person name="Kucherlapati R."/>
            <person name="Weinstock G."/>
            <person name="Gibbs R.A."/>
        </authorList>
    </citation>
    <scope>NUCLEOTIDE SEQUENCE [LARGE SCALE GENOMIC DNA]</scope>
</reference>
<sequence length="305" mass="35334">MASNRQRSLRGPSHPSHMEEPFLQMVQASESLPPSQTWAQREFFLPSESWEFPGFTRQAYHQLALKLPPCTDMKSKVRQRLIHPWKGGAQHTWGFHTWLDVCRLPATFPTQPDRPYDSNVWRWLTDSNAHRCPPTEHPIPPPSWMGQNSFLTFIHCYPTFVDMKRKKQVIFRTVKELKEVEKLKLRSEARAPPLDAQGNIQPPASFKKYRHISAGGRFEPQGLQLMPNPFPNNFARSWPCPNPLPHYQEKVLKLALLPSAPLSQDLIRDFQTLIKDRTALPLHHLSKAQASKSPARKRKRRPGHF</sequence>
<keyword id="KW-1267">Proteomics identification</keyword>
<keyword id="KW-1185">Reference proteome</keyword>
<comment type="tissue specificity">
    <text evidence="2">Expressed in Testis.</text>
</comment>
<gene>
    <name evidence="3" type="primary">TEX52</name>
</gene>
<dbReference type="EMBL" id="AC005841">
    <property type="status" value="NOT_ANNOTATED_CDS"/>
    <property type="molecule type" value="Genomic_DNA"/>
</dbReference>
<dbReference type="CCDS" id="CCDS91638.1"/>
<dbReference type="RefSeq" id="NP_001352103.1">
    <property type="nucleotide sequence ID" value="NM_001365174.2"/>
</dbReference>
<dbReference type="RefSeq" id="XP_005253874.2">
    <property type="nucleotide sequence ID" value="XM_005253817.3"/>
</dbReference>
<dbReference type="RefSeq" id="XP_005276471.2">
    <property type="nucleotide sequence ID" value="XM_005276414.3"/>
</dbReference>
<dbReference type="RefSeq" id="XP_047284009.1">
    <property type="nucleotide sequence ID" value="XM_047428053.1"/>
</dbReference>
<dbReference type="RefSeq" id="XP_054226707.1">
    <property type="nucleotide sequence ID" value="XM_054370732.1"/>
</dbReference>
<dbReference type="SMR" id="A6NCN8"/>
<dbReference type="FunCoup" id="A6NCN8">
    <property type="interactions" value="9"/>
</dbReference>
<dbReference type="STRING" id="9606.ENSP00000489863"/>
<dbReference type="PhosphoSitePlus" id="A6NCN8"/>
<dbReference type="BioMuta" id="-"/>
<dbReference type="MassIVE" id="A6NCN8"/>
<dbReference type="PeptideAtlas" id="A6NCN8"/>
<dbReference type="Ensembl" id="ENST00000637658.2">
    <property type="protein sequence ID" value="ENSP00000489863.1"/>
    <property type="gene ID" value="ENSG00000283297.2"/>
</dbReference>
<dbReference type="GeneID" id="101929469"/>
<dbReference type="MANE-Select" id="ENST00000637658.2">
    <property type="protein sequence ID" value="ENSP00000489863.1"/>
    <property type="RefSeq nucleotide sequence ID" value="NM_001365174.2"/>
    <property type="RefSeq protein sequence ID" value="NP_001352103.1"/>
</dbReference>
<dbReference type="AGR" id="HGNC:53643"/>
<dbReference type="GeneCards" id="TEX52"/>
<dbReference type="HGNC" id="HGNC:53643">
    <property type="gene designation" value="TEX52"/>
</dbReference>
<dbReference type="HPA" id="ENSG00000283297">
    <property type="expression patterns" value="Tissue enhanced (testis)"/>
</dbReference>
<dbReference type="neXtProt" id="NX_A6NCN8"/>
<dbReference type="VEuPathDB" id="HostDB:ENSG00000283297"/>
<dbReference type="GeneTree" id="ENSGT00390000006066"/>
<dbReference type="InParanoid" id="A6NCN8"/>
<dbReference type="OMA" id="QHTWGFH"/>
<dbReference type="OrthoDB" id="10017413at2759"/>
<dbReference type="PAN-GO" id="A6NCN8">
    <property type="GO annotations" value="0 GO annotations based on evolutionary models"/>
</dbReference>
<dbReference type="PhylomeDB" id="A6NCN8"/>
<dbReference type="Pharos" id="A6NCN8">
    <property type="development level" value="Tdark"/>
</dbReference>
<dbReference type="PRO" id="PR:A6NCN8"/>
<dbReference type="Proteomes" id="UP000005640">
    <property type="component" value="Chromosome 12"/>
</dbReference>
<dbReference type="RNAct" id="A6NCN8">
    <property type="molecule type" value="protein"/>
</dbReference>
<dbReference type="Bgee" id="ENSG00000283297">
    <property type="expression patterns" value="Expressed in male germ line stem cell (sensu Vertebrata) in testis and 99 other cell types or tissues"/>
</dbReference>
<dbReference type="InterPro" id="IPR029206">
    <property type="entry name" value="DUF4532"/>
</dbReference>
<dbReference type="PANTHER" id="PTHR35156">
    <property type="entry name" value="TESTIS-EXPRESSED PROTEIN 52"/>
    <property type="match status" value="1"/>
</dbReference>
<dbReference type="PANTHER" id="PTHR35156:SF1">
    <property type="entry name" value="TESTIS-EXPRESSED PROTEIN 52"/>
    <property type="match status" value="1"/>
</dbReference>
<dbReference type="Pfam" id="PF15046">
    <property type="entry name" value="DUF4532"/>
    <property type="match status" value="1"/>
</dbReference>
<protein>
    <recommendedName>
        <fullName evidence="2">Testis-expressed protein 52</fullName>
    </recommendedName>
</protein>
<evidence type="ECO:0000256" key="1">
    <source>
        <dbReference type="SAM" id="MobiDB-lite"/>
    </source>
</evidence>
<evidence type="ECO:0000305" key="2"/>
<evidence type="ECO:0000312" key="3">
    <source>
        <dbReference type="HGNC" id="HGNC:53643"/>
    </source>
</evidence>
<feature type="chain" id="PRO_0000346159" description="Testis-expressed protein 52">
    <location>
        <begin position="1"/>
        <end position="305"/>
    </location>
</feature>
<feature type="region of interest" description="Disordered" evidence="1">
    <location>
        <begin position="284"/>
        <end position="305"/>
    </location>
</feature>
<feature type="compositionally biased region" description="Basic residues" evidence="1">
    <location>
        <begin position="294"/>
        <end position="305"/>
    </location>
</feature>
<organism>
    <name type="scientific">Homo sapiens</name>
    <name type="common">Human</name>
    <dbReference type="NCBI Taxonomy" id="9606"/>
    <lineage>
        <taxon>Eukaryota</taxon>
        <taxon>Metazoa</taxon>
        <taxon>Chordata</taxon>
        <taxon>Craniata</taxon>
        <taxon>Vertebrata</taxon>
        <taxon>Euteleostomi</taxon>
        <taxon>Mammalia</taxon>
        <taxon>Eutheria</taxon>
        <taxon>Euarchontoglires</taxon>
        <taxon>Primates</taxon>
        <taxon>Haplorrhini</taxon>
        <taxon>Catarrhini</taxon>
        <taxon>Hominidae</taxon>
        <taxon>Homo</taxon>
    </lineage>
</organism>
<proteinExistence type="evidence at protein level"/>
<accession>A6NCN8</accession>